<gene>
    <name evidence="1" type="primary">ispE</name>
    <name type="ordered locus">HCH_01727</name>
</gene>
<accession>Q2SLA0</accession>
<reference key="1">
    <citation type="journal article" date="2005" name="Nucleic Acids Res.">
        <title>Genomic blueprint of Hahella chejuensis, a marine microbe producing an algicidal agent.</title>
        <authorList>
            <person name="Jeong H."/>
            <person name="Yim J.H."/>
            <person name="Lee C."/>
            <person name="Choi S.-H."/>
            <person name="Park Y.K."/>
            <person name="Yoon S.H."/>
            <person name="Hur C.-G."/>
            <person name="Kang H.-Y."/>
            <person name="Kim D."/>
            <person name="Lee H.H."/>
            <person name="Park K.H."/>
            <person name="Park S.-H."/>
            <person name="Park H.-S."/>
            <person name="Lee H.K."/>
            <person name="Oh T.K."/>
            <person name="Kim J.F."/>
        </authorList>
    </citation>
    <scope>NUCLEOTIDE SEQUENCE [LARGE SCALE GENOMIC DNA]</scope>
    <source>
        <strain>KCTC 2396</strain>
    </source>
</reference>
<proteinExistence type="inferred from homology"/>
<name>ISPE_HAHCH</name>
<comment type="function">
    <text evidence="1">Catalyzes the phosphorylation of the position 2 hydroxy group of 4-diphosphocytidyl-2C-methyl-D-erythritol.</text>
</comment>
<comment type="catalytic activity">
    <reaction evidence="1">
        <text>4-CDP-2-C-methyl-D-erythritol + ATP = 4-CDP-2-C-methyl-D-erythritol 2-phosphate + ADP + H(+)</text>
        <dbReference type="Rhea" id="RHEA:18437"/>
        <dbReference type="ChEBI" id="CHEBI:15378"/>
        <dbReference type="ChEBI" id="CHEBI:30616"/>
        <dbReference type="ChEBI" id="CHEBI:57823"/>
        <dbReference type="ChEBI" id="CHEBI:57919"/>
        <dbReference type="ChEBI" id="CHEBI:456216"/>
        <dbReference type="EC" id="2.7.1.148"/>
    </reaction>
</comment>
<comment type="pathway">
    <text evidence="1">Isoprenoid biosynthesis; isopentenyl diphosphate biosynthesis via DXP pathway; isopentenyl diphosphate from 1-deoxy-D-xylulose 5-phosphate: step 3/6.</text>
</comment>
<comment type="similarity">
    <text evidence="1">Belongs to the GHMP kinase family. IspE subfamily.</text>
</comment>
<organism>
    <name type="scientific">Hahella chejuensis (strain KCTC 2396)</name>
    <dbReference type="NCBI Taxonomy" id="349521"/>
    <lineage>
        <taxon>Bacteria</taxon>
        <taxon>Pseudomonadati</taxon>
        <taxon>Pseudomonadota</taxon>
        <taxon>Gammaproteobacteria</taxon>
        <taxon>Oceanospirillales</taxon>
        <taxon>Hahellaceae</taxon>
        <taxon>Hahella</taxon>
    </lineage>
</organism>
<keyword id="KW-0067">ATP-binding</keyword>
<keyword id="KW-0414">Isoprene biosynthesis</keyword>
<keyword id="KW-0418">Kinase</keyword>
<keyword id="KW-0547">Nucleotide-binding</keyword>
<keyword id="KW-1185">Reference proteome</keyword>
<keyword id="KW-0808">Transferase</keyword>
<evidence type="ECO:0000255" key="1">
    <source>
        <dbReference type="HAMAP-Rule" id="MF_00061"/>
    </source>
</evidence>
<sequence>MRNETLTLSSPAKLNLFLHITGRRPDGYHELQTLFQLLDYGDSLSFTPRDDQRITLEPSLPGVPEADNLIIKAARLLKEHITATSPDKAGQISGVSIYINKKLPMGGGIGGGSSNAATTLLALNRLWNADINTETLAALGLKLGADVPVFVRGATAFAEGVGDILHPVDTQEKWYLVVHPNLHISTAKIFSDKWLTRDTPKSTIAPALEGDLENLRNDCETVVCRMYPEIREAINWLDQFSPARLTGTGACIFASFSDKKRAEYVLSQMPTKYQGFVAKSINESPVLNELKQWRNH</sequence>
<protein>
    <recommendedName>
        <fullName evidence="1">4-diphosphocytidyl-2-C-methyl-D-erythritol kinase</fullName>
        <shortName evidence="1">CMK</shortName>
        <ecNumber evidence="1">2.7.1.148</ecNumber>
    </recommendedName>
    <alternativeName>
        <fullName evidence="1">4-(cytidine-5'-diphospho)-2-C-methyl-D-erythritol kinase</fullName>
    </alternativeName>
</protein>
<dbReference type="EC" id="2.7.1.148" evidence="1"/>
<dbReference type="EMBL" id="CP000155">
    <property type="protein sequence ID" value="ABC28574.1"/>
    <property type="molecule type" value="Genomic_DNA"/>
</dbReference>
<dbReference type="RefSeq" id="WP_011395646.1">
    <property type="nucleotide sequence ID" value="NC_007645.1"/>
</dbReference>
<dbReference type="SMR" id="Q2SLA0"/>
<dbReference type="STRING" id="349521.HCH_01727"/>
<dbReference type="KEGG" id="hch:HCH_01727"/>
<dbReference type="eggNOG" id="COG1947">
    <property type="taxonomic scope" value="Bacteria"/>
</dbReference>
<dbReference type="HOGENOM" id="CLU_053057_3_0_6"/>
<dbReference type="OrthoDB" id="9809438at2"/>
<dbReference type="UniPathway" id="UPA00056">
    <property type="reaction ID" value="UER00094"/>
</dbReference>
<dbReference type="Proteomes" id="UP000000238">
    <property type="component" value="Chromosome"/>
</dbReference>
<dbReference type="GO" id="GO:0050515">
    <property type="term" value="F:4-(cytidine 5'-diphospho)-2-C-methyl-D-erythritol kinase activity"/>
    <property type="evidence" value="ECO:0007669"/>
    <property type="project" value="UniProtKB-UniRule"/>
</dbReference>
<dbReference type="GO" id="GO:0005524">
    <property type="term" value="F:ATP binding"/>
    <property type="evidence" value="ECO:0007669"/>
    <property type="project" value="UniProtKB-UniRule"/>
</dbReference>
<dbReference type="GO" id="GO:0019288">
    <property type="term" value="P:isopentenyl diphosphate biosynthetic process, methylerythritol 4-phosphate pathway"/>
    <property type="evidence" value="ECO:0007669"/>
    <property type="project" value="UniProtKB-UniRule"/>
</dbReference>
<dbReference type="GO" id="GO:0016114">
    <property type="term" value="P:terpenoid biosynthetic process"/>
    <property type="evidence" value="ECO:0007669"/>
    <property type="project" value="InterPro"/>
</dbReference>
<dbReference type="Gene3D" id="3.30.230.10">
    <property type="match status" value="1"/>
</dbReference>
<dbReference type="Gene3D" id="3.30.70.890">
    <property type="entry name" value="GHMP kinase, C-terminal domain"/>
    <property type="match status" value="1"/>
</dbReference>
<dbReference type="HAMAP" id="MF_00061">
    <property type="entry name" value="IspE"/>
    <property type="match status" value="1"/>
</dbReference>
<dbReference type="InterPro" id="IPR013750">
    <property type="entry name" value="GHMP_kinase_C_dom"/>
</dbReference>
<dbReference type="InterPro" id="IPR036554">
    <property type="entry name" value="GHMP_kinase_C_sf"/>
</dbReference>
<dbReference type="InterPro" id="IPR006204">
    <property type="entry name" value="GHMP_kinase_N_dom"/>
</dbReference>
<dbReference type="InterPro" id="IPR004424">
    <property type="entry name" value="IspE"/>
</dbReference>
<dbReference type="InterPro" id="IPR020568">
    <property type="entry name" value="Ribosomal_Su5_D2-typ_SF"/>
</dbReference>
<dbReference type="InterPro" id="IPR014721">
    <property type="entry name" value="Ribsml_uS5_D2-typ_fold_subgr"/>
</dbReference>
<dbReference type="NCBIfam" id="TIGR00154">
    <property type="entry name" value="ispE"/>
    <property type="match status" value="1"/>
</dbReference>
<dbReference type="PANTHER" id="PTHR43527">
    <property type="entry name" value="4-DIPHOSPHOCYTIDYL-2-C-METHYL-D-ERYTHRITOL KINASE, CHLOROPLASTIC"/>
    <property type="match status" value="1"/>
</dbReference>
<dbReference type="PANTHER" id="PTHR43527:SF2">
    <property type="entry name" value="4-DIPHOSPHOCYTIDYL-2-C-METHYL-D-ERYTHRITOL KINASE, CHLOROPLASTIC"/>
    <property type="match status" value="1"/>
</dbReference>
<dbReference type="Pfam" id="PF08544">
    <property type="entry name" value="GHMP_kinases_C"/>
    <property type="match status" value="1"/>
</dbReference>
<dbReference type="Pfam" id="PF00288">
    <property type="entry name" value="GHMP_kinases_N"/>
    <property type="match status" value="1"/>
</dbReference>
<dbReference type="PIRSF" id="PIRSF010376">
    <property type="entry name" value="IspE"/>
    <property type="match status" value="1"/>
</dbReference>
<dbReference type="SUPFAM" id="SSF55060">
    <property type="entry name" value="GHMP Kinase, C-terminal domain"/>
    <property type="match status" value="1"/>
</dbReference>
<dbReference type="SUPFAM" id="SSF54211">
    <property type="entry name" value="Ribosomal protein S5 domain 2-like"/>
    <property type="match status" value="1"/>
</dbReference>
<feature type="chain" id="PRO_0000235098" description="4-diphosphocytidyl-2-C-methyl-D-erythritol kinase">
    <location>
        <begin position="1"/>
        <end position="296"/>
    </location>
</feature>
<feature type="active site" evidence="1">
    <location>
        <position position="13"/>
    </location>
</feature>
<feature type="active site" evidence="1">
    <location>
        <position position="146"/>
    </location>
</feature>
<feature type="binding site" evidence="1">
    <location>
        <begin position="104"/>
        <end position="114"/>
    </location>
    <ligand>
        <name>ATP</name>
        <dbReference type="ChEBI" id="CHEBI:30616"/>
    </ligand>
</feature>